<dbReference type="EC" id="6.2.1.5" evidence="1"/>
<dbReference type="EMBL" id="CP001052">
    <property type="protein sequence ID" value="ACD17683.1"/>
    <property type="molecule type" value="Genomic_DNA"/>
</dbReference>
<dbReference type="RefSeq" id="WP_012434252.1">
    <property type="nucleotide sequence ID" value="NC_010681.1"/>
</dbReference>
<dbReference type="SMR" id="B2SYE8"/>
<dbReference type="STRING" id="398527.Bphyt_3292"/>
<dbReference type="GeneID" id="97308857"/>
<dbReference type="KEGG" id="bpy:Bphyt_3292"/>
<dbReference type="eggNOG" id="COG0045">
    <property type="taxonomic scope" value="Bacteria"/>
</dbReference>
<dbReference type="HOGENOM" id="CLU_037430_0_2_4"/>
<dbReference type="OrthoDB" id="9802602at2"/>
<dbReference type="UniPathway" id="UPA00223">
    <property type="reaction ID" value="UER00999"/>
</dbReference>
<dbReference type="Proteomes" id="UP000001739">
    <property type="component" value="Chromosome 1"/>
</dbReference>
<dbReference type="GO" id="GO:0005829">
    <property type="term" value="C:cytosol"/>
    <property type="evidence" value="ECO:0007669"/>
    <property type="project" value="TreeGrafter"/>
</dbReference>
<dbReference type="GO" id="GO:0042709">
    <property type="term" value="C:succinate-CoA ligase complex"/>
    <property type="evidence" value="ECO:0007669"/>
    <property type="project" value="TreeGrafter"/>
</dbReference>
<dbReference type="GO" id="GO:0005524">
    <property type="term" value="F:ATP binding"/>
    <property type="evidence" value="ECO:0007669"/>
    <property type="project" value="UniProtKB-UniRule"/>
</dbReference>
<dbReference type="GO" id="GO:0000287">
    <property type="term" value="F:magnesium ion binding"/>
    <property type="evidence" value="ECO:0007669"/>
    <property type="project" value="UniProtKB-UniRule"/>
</dbReference>
<dbReference type="GO" id="GO:0004775">
    <property type="term" value="F:succinate-CoA ligase (ADP-forming) activity"/>
    <property type="evidence" value="ECO:0007669"/>
    <property type="project" value="UniProtKB-UniRule"/>
</dbReference>
<dbReference type="GO" id="GO:0004776">
    <property type="term" value="F:succinate-CoA ligase (GDP-forming) activity"/>
    <property type="evidence" value="ECO:0007669"/>
    <property type="project" value="RHEA"/>
</dbReference>
<dbReference type="GO" id="GO:0006104">
    <property type="term" value="P:succinyl-CoA metabolic process"/>
    <property type="evidence" value="ECO:0007669"/>
    <property type="project" value="TreeGrafter"/>
</dbReference>
<dbReference type="GO" id="GO:0006099">
    <property type="term" value="P:tricarboxylic acid cycle"/>
    <property type="evidence" value="ECO:0007669"/>
    <property type="project" value="UniProtKB-UniRule"/>
</dbReference>
<dbReference type="FunFam" id="3.30.1490.20:FF:000002">
    <property type="entry name" value="Succinate--CoA ligase [ADP-forming] subunit beta"/>
    <property type="match status" value="1"/>
</dbReference>
<dbReference type="FunFam" id="3.30.470.20:FF:000002">
    <property type="entry name" value="Succinate--CoA ligase [ADP-forming] subunit beta"/>
    <property type="match status" value="1"/>
</dbReference>
<dbReference type="FunFam" id="3.40.50.261:FF:000001">
    <property type="entry name" value="Succinate--CoA ligase [ADP-forming] subunit beta"/>
    <property type="match status" value="1"/>
</dbReference>
<dbReference type="Gene3D" id="3.30.1490.20">
    <property type="entry name" value="ATP-grasp fold, A domain"/>
    <property type="match status" value="1"/>
</dbReference>
<dbReference type="Gene3D" id="3.30.470.20">
    <property type="entry name" value="ATP-grasp fold, B domain"/>
    <property type="match status" value="1"/>
</dbReference>
<dbReference type="Gene3D" id="3.40.50.261">
    <property type="entry name" value="Succinyl-CoA synthetase domains"/>
    <property type="match status" value="1"/>
</dbReference>
<dbReference type="HAMAP" id="MF_00558">
    <property type="entry name" value="Succ_CoA_beta"/>
    <property type="match status" value="1"/>
</dbReference>
<dbReference type="InterPro" id="IPR011761">
    <property type="entry name" value="ATP-grasp"/>
</dbReference>
<dbReference type="InterPro" id="IPR013650">
    <property type="entry name" value="ATP-grasp_succ-CoA_synth-type"/>
</dbReference>
<dbReference type="InterPro" id="IPR013815">
    <property type="entry name" value="ATP_grasp_subdomain_1"/>
</dbReference>
<dbReference type="InterPro" id="IPR017866">
    <property type="entry name" value="Succ-CoA_synthase_bsu_CS"/>
</dbReference>
<dbReference type="InterPro" id="IPR005811">
    <property type="entry name" value="SUCC_ACL_C"/>
</dbReference>
<dbReference type="InterPro" id="IPR005809">
    <property type="entry name" value="Succ_CoA_ligase-like_bsu"/>
</dbReference>
<dbReference type="InterPro" id="IPR016102">
    <property type="entry name" value="Succinyl-CoA_synth-like"/>
</dbReference>
<dbReference type="NCBIfam" id="NF001913">
    <property type="entry name" value="PRK00696.1"/>
    <property type="match status" value="1"/>
</dbReference>
<dbReference type="NCBIfam" id="TIGR01016">
    <property type="entry name" value="sucCoAbeta"/>
    <property type="match status" value="1"/>
</dbReference>
<dbReference type="PANTHER" id="PTHR11815:SF10">
    <property type="entry name" value="SUCCINATE--COA LIGASE [GDP-FORMING] SUBUNIT BETA, MITOCHONDRIAL"/>
    <property type="match status" value="1"/>
</dbReference>
<dbReference type="PANTHER" id="PTHR11815">
    <property type="entry name" value="SUCCINYL-COA SYNTHETASE BETA CHAIN"/>
    <property type="match status" value="1"/>
</dbReference>
<dbReference type="Pfam" id="PF08442">
    <property type="entry name" value="ATP-grasp_2"/>
    <property type="match status" value="1"/>
</dbReference>
<dbReference type="Pfam" id="PF00549">
    <property type="entry name" value="Ligase_CoA"/>
    <property type="match status" value="1"/>
</dbReference>
<dbReference type="PIRSF" id="PIRSF001554">
    <property type="entry name" value="SucCS_beta"/>
    <property type="match status" value="1"/>
</dbReference>
<dbReference type="SUPFAM" id="SSF56059">
    <property type="entry name" value="Glutathione synthetase ATP-binding domain-like"/>
    <property type="match status" value="1"/>
</dbReference>
<dbReference type="SUPFAM" id="SSF52210">
    <property type="entry name" value="Succinyl-CoA synthetase domains"/>
    <property type="match status" value="1"/>
</dbReference>
<dbReference type="PROSITE" id="PS50975">
    <property type="entry name" value="ATP_GRASP"/>
    <property type="match status" value="1"/>
</dbReference>
<dbReference type="PROSITE" id="PS01217">
    <property type="entry name" value="SUCCINYL_COA_LIG_3"/>
    <property type="match status" value="1"/>
</dbReference>
<gene>
    <name evidence="1" type="primary">sucC</name>
    <name type="ordered locus">Bphyt_3292</name>
</gene>
<comment type="function">
    <text evidence="1">Succinyl-CoA synthetase functions in the citric acid cycle (TCA), coupling the hydrolysis of succinyl-CoA to the synthesis of either ATP or GTP and thus represents the only step of substrate-level phosphorylation in the TCA. The beta subunit provides nucleotide specificity of the enzyme and binds the substrate succinate, while the binding sites for coenzyme A and phosphate are found in the alpha subunit.</text>
</comment>
<comment type="catalytic activity">
    <reaction evidence="1">
        <text>succinate + ATP + CoA = succinyl-CoA + ADP + phosphate</text>
        <dbReference type="Rhea" id="RHEA:17661"/>
        <dbReference type="ChEBI" id="CHEBI:30031"/>
        <dbReference type="ChEBI" id="CHEBI:30616"/>
        <dbReference type="ChEBI" id="CHEBI:43474"/>
        <dbReference type="ChEBI" id="CHEBI:57287"/>
        <dbReference type="ChEBI" id="CHEBI:57292"/>
        <dbReference type="ChEBI" id="CHEBI:456216"/>
        <dbReference type="EC" id="6.2.1.5"/>
    </reaction>
    <physiologicalReaction direction="right-to-left" evidence="1">
        <dbReference type="Rhea" id="RHEA:17663"/>
    </physiologicalReaction>
</comment>
<comment type="catalytic activity">
    <reaction evidence="1">
        <text>GTP + succinate + CoA = succinyl-CoA + GDP + phosphate</text>
        <dbReference type="Rhea" id="RHEA:22120"/>
        <dbReference type="ChEBI" id="CHEBI:30031"/>
        <dbReference type="ChEBI" id="CHEBI:37565"/>
        <dbReference type="ChEBI" id="CHEBI:43474"/>
        <dbReference type="ChEBI" id="CHEBI:57287"/>
        <dbReference type="ChEBI" id="CHEBI:57292"/>
        <dbReference type="ChEBI" id="CHEBI:58189"/>
    </reaction>
    <physiologicalReaction direction="right-to-left" evidence="1">
        <dbReference type="Rhea" id="RHEA:22122"/>
    </physiologicalReaction>
</comment>
<comment type="cofactor">
    <cofactor evidence="1">
        <name>Mg(2+)</name>
        <dbReference type="ChEBI" id="CHEBI:18420"/>
    </cofactor>
    <text evidence="1">Binds 1 Mg(2+) ion per subunit.</text>
</comment>
<comment type="pathway">
    <text evidence="1">Carbohydrate metabolism; tricarboxylic acid cycle; succinate from succinyl-CoA (ligase route): step 1/1.</text>
</comment>
<comment type="subunit">
    <text evidence="1">Heterotetramer of two alpha and two beta subunits.</text>
</comment>
<comment type="similarity">
    <text evidence="1">Belongs to the succinate/malate CoA ligase beta subunit family.</text>
</comment>
<protein>
    <recommendedName>
        <fullName evidence="1">Succinate--CoA ligase [ADP-forming] subunit beta</fullName>
        <ecNumber evidence="1">6.2.1.5</ecNumber>
    </recommendedName>
    <alternativeName>
        <fullName evidence="1">Succinyl-CoA synthetase subunit beta</fullName>
        <shortName evidence="1">SCS-beta</shortName>
    </alternativeName>
</protein>
<proteinExistence type="inferred from homology"/>
<accession>B2SYE8</accession>
<organism>
    <name type="scientific">Paraburkholderia phytofirmans (strain DSM 17436 / LMG 22146 / PsJN)</name>
    <name type="common">Burkholderia phytofirmans</name>
    <dbReference type="NCBI Taxonomy" id="398527"/>
    <lineage>
        <taxon>Bacteria</taxon>
        <taxon>Pseudomonadati</taxon>
        <taxon>Pseudomonadota</taxon>
        <taxon>Betaproteobacteria</taxon>
        <taxon>Burkholderiales</taxon>
        <taxon>Burkholderiaceae</taxon>
        <taxon>Paraburkholderia</taxon>
    </lineage>
</organism>
<keyword id="KW-0067">ATP-binding</keyword>
<keyword id="KW-0436">Ligase</keyword>
<keyword id="KW-0460">Magnesium</keyword>
<keyword id="KW-0479">Metal-binding</keyword>
<keyword id="KW-0547">Nucleotide-binding</keyword>
<keyword id="KW-0816">Tricarboxylic acid cycle</keyword>
<reference key="1">
    <citation type="journal article" date="2011" name="J. Bacteriol.">
        <title>Complete genome sequence of the plant growth-promoting endophyte Burkholderia phytofirmans strain PsJN.</title>
        <authorList>
            <person name="Weilharter A."/>
            <person name="Mitter B."/>
            <person name="Shin M.V."/>
            <person name="Chain P.S."/>
            <person name="Nowak J."/>
            <person name="Sessitsch A."/>
        </authorList>
    </citation>
    <scope>NUCLEOTIDE SEQUENCE [LARGE SCALE GENOMIC DNA]</scope>
    <source>
        <strain>DSM 17436 / LMG 22146 / PsJN</strain>
    </source>
</reference>
<evidence type="ECO:0000255" key="1">
    <source>
        <dbReference type="HAMAP-Rule" id="MF_00558"/>
    </source>
</evidence>
<name>SUCC_PARPJ</name>
<sequence>MKIHEYQGKEILRKFGVAVPRGKPVFSVDDAVKAAEELGGPVWVVKAQIHAGGRGKGGGVKVAKSLDQVREYSEQILGMQLVTHQTGPEGQKVNRLLIEEGADIKKELYVGLVIDRVSQKIVVMASSEGGMDVEEVAEKTPELIHKIAVDPATGLKDAEADELATKIGVPAASLPQARAILQGLYKAFWETDASLAEINPLILTGDGKVIALDAKFNFDSNALFRHPEIVAYRDLDEEDPAEVEASKFDLAYISLDGNIGCLVNGAGLAMATMDTIKLFGGEPANFLDVGGGATTEKVTEAFKIMLKNPNLTAILVNIFGGIMRCDVIAEGVIAASKAVSLKVPLVVRMKGTNEDLGKKMLAESGLPIIAADSMEEAAQKVVAAAAGKA</sequence>
<feature type="chain" id="PRO_1000129169" description="Succinate--CoA ligase [ADP-forming] subunit beta">
    <location>
        <begin position="1"/>
        <end position="389"/>
    </location>
</feature>
<feature type="domain" description="ATP-grasp" evidence="1">
    <location>
        <begin position="9"/>
        <end position="244"/>
    </location>
</feature>
<feature type="binding site" evidence="1">
    <location>
        <position position="46"/>
    </location>
    <ligand>
        <name>ATP</name>
        <dbReference type="ChEBI" id="CHEBI:30616"/>
    </ligand>
</feature>
<feature type="binding site" evidence="1">
    <location>
        <begin position="53"/>
        <end position="55"/>
    </location>
    <ligand>
        <name>ATP</name>
        <dbReference type="ChEBI" id="CHEBI:30616"/>
    </ligand>
</feature>
<feature type="binding site" evidence="1">
    <location>
        <position position="99"/>
    </location>
    <ligand>
        <name>ATP</name>
        <dbReference type="ChEBI" id="CHEBI:30616"/>
    </ligand>
</feature>
<feature type="binding site" evidence="1">
    <location>
        <position position="102"/>
    </location>
    <ligand>
        <name>ATP</name>
        <dbReference type="ChEBI" id="CHEBI:30616"/>
    </ligand>
</feature>
<feature type="binding site" evidence="1">
    <location>
        <position position="107"/>
    </location>
    <ligand>
        <name>ATP</name>
        <dbReference type="ChEBI" id="CHEBI:30616"/>
    </ligand>
</feature>
<feature type="binding site" evidence="1">
    <location>
        <position position="199"/>
    </location>
    <ligand>
        <name>Mg(2+)</name>
        <dbReference type="ChEBI" id="CHEBI:18420"/>
    </ligand>
</feature>
<feature type="binding site" evidence="1">
    <location>
        <position position="213"/>
    </location>
    <ligand>
        <name>Mg(2+)</name>
        <dbReference type="ChEBI" id="CHEBI:18420"/>
    </ligand>
</feature>
<feature type="binding site" evidence="1">
    <location>
        <position position="264"/>
    </location>
    <ligand>
        <name>substrate</name>
        <note>ligand shared with subunit alpha</note>
    </ligand>
</feature>
<feature type="binding site" evidence="1">
    <location>
        <begin position="321"/>
        <end position="323"/>
    </location>
    <ligand>
        <name>substrate</name>
        <note>ligand shared with subunit alpha</note>
    </ligand>
</feature>